<proteinExistence type="inferred from homology"/>
<keyword id="KW-0963">Cytoplasm</keyword>
<keyword id="KW-0269">Exonuclease</keyword>
<keyword id="KW-0378">Hydrolase</keyword>
<keyword id="KW-0540">Nuclease</keyword>
<gene>
    <name evidence="1" type="primary">xseB</name>
    <name type="ordered locus">lwe1377</name>
</gene>
<accession>A0AIG3</accession>
<organism>
    <name type="scientific">Listeria welshimeri serovar 6b (strain ATCC 35897 / DSM 20650 / CCUG 15529 / CIP 8149 / NCTC 11857 / SLCC 5334 / V8)</name>
    <dbReference type="NCBI Taxonomy" id="386043"/>
    <lineage>
        <taxon>Bacteria</taxon>
        <taxon>Bacillati</taxon>
        <taxon>Bacillota</taxon>
        <taxon>Bacilli</taxon>
        <taxon>Bacillales</taxon>
        <taxon>Listeriaceae</taxon>
        <taxon>Listeria</taxon>
    </lineage>
</organism>
<protein>
    <recommendedName>
        <fullName evidence="1">Exodeoxyribonuclease 7 small subunit</fullName>
        <ecNumber evidence="1">3.1.11.6</ecNumber>
    </recommendedName>
    <alternativeName>
        <fullName evidence="1">Exodeoxyribonuclease VII small subunit</fullName>
        <shortName evidence="1">Exonuclease VII small subunit</shortName>
    </alternativeName>
</protein>
<name>EX7S_LISW6</name>
<sequence length="75" mass="8311">MATKKKTFEEAIAELETIVEALENGSASLEDSLDMYQKGIELTKLCQDKLQTAEKRMAKVVTDTGEEIPFEADGE</sequence>
<dbReference type="EC" id="3.1.11.6" evidence="1"/>
<dbReference type="EMBL" id="AM263198">
    <property type="protein sequence ID" value="CAK20795.1"/>
    <property type="molecule type" value="Genomic_DNA"/>
</dbReference>
<dbReference type="RefSeq" id="WP_011702176.1">
    <property type="nucleotide sequence ID" value="NC_008555.1"/>
</dbReference>
<dbReference type="SMR" id="A0AIG3"/>
<dbReference type="STRING" id="386043.lwe1377"/>
<dbReference type="GeneID" id="61189253"/>
<dbReference type="KEGG" id="lwe:lwe1377"/>
<dbReference type="eggNOG" id="COG1722">
    <property type="taxonomic scope" value="Bacteria"/>
</dbReference>
<dbReference type="HOGENOM" id="CLU_145918_3_1_9"/>
<dbReference type="OrthoDB" id="9798666at2"/>
<dbReference type="Proteomes" id="UP000000779">
    <property type="component" value="Chromosome"/>
</dbReference>
<dbReference type="GO" id="GO:0005829">
    <property type="term" value="C:cytosol"/>
    <property type="evidence" value="ECO:0007669"/>
    <property type="project" value="TreeGrafter"/>
</dbReference>
<dbReference type="GO" id="GO:0009318">
    <property type="term" value="C:exodeoxyribonuclease VII complex"/>
    <property type="evidence" value="ECO:0007669"/>
    <property type="project" value="InterPro"/>
</dbReference>
<dbReference type="GO" id="GO:0008855">
    <property type="term" value="F:exodeoxyribonuclease VII activity"/>
    <property type="evidence" value="ECO:0007669"/>
    <property type="project" value="UniProtKB-UniRule"/>
</dbReference>
<dbReference type="GO" id="GO:0006308">
    <property type="term" value="P:DNA catabolic process"/>
    <property type="evidence" value="ECO:0007669"/>
    <property type="project" value="UniProtKB-UniRule"/>
</dbReference>
<dbReference type="Gene3D" id="1.10.287.1040">
    <property type="entry name" value="Exonuclease VII, small subunit"/>
    <property type="match status" value="1"/>
</dbReference>
<dbReference type="HAMAP" id="MF_00337">
    <property type="entry name" value="Exonuc_7_S"/>
    <property type="match status" value="1"/>
</dbReference>
<dbReference type="InterPro" id="IPR003761">
    <property type="entry name" value="Exonuc_VII_S"/>
</dbReference>
<dbReference type="InterPro" id="IPR037004">
    <property type="entry name" value="Exonuc_VII_ssu_sf"/>
</dbReference>
<dbReference type="NCBIfam" id="NF002138">
    <property type="entry name" value="PRK00977.1-2"/>
    <property type="match status" value="1"/>
</dbReference>
<dbReference type="NCBIfam" id="NF002139">
    <property type="entry name" value="PRK00977.1-3"/>
    <property type="match status" value="1"/>
</dbReference>
<dbReference type="NCBIfam" id="NF002140">
    <property type="entry name" value="PRK00977.1-4"/>
    <property type="match status" value="1"/>
</dbReference>
<dbReference type="NCBIfam" id="NF010667">
    <property type="entry name" value="PRK14064.1"/>
    <property type="match status" value="1"/>
</dbReference>
<dbReference type="NCBIfam" id="TIGR01280">
    <property type="entry name" value="xseB"/>
    <property type="match status" value="1"/>
</dbReference>
<dbReference type="PANTHER" id="PTHR34137">
    <property type="entry name" value="EXODEOXYRIBONUCLEASE 7 SMALL SUBUNIT"/>
    <property type="match status" value="1"/>
</dbReference>
<dbReference type="PANTHER" id="PTHR34137:SF1">
    <property type="entry name" value="EXODEOXYRIBONUCLEASE 7 SMALL SUBUNIT"/>
    <property type="match status" value="1"/>
</dbReference>
<dbReference type="Pfam" id="PF02609">
    <property type="entry name" value="Exonuc_VII_S"/>
    <property type="match status" value="1"/>
</dbReference>
<dbReference type="PIRSF" id="PIRSF006488">
    <property type="entry name" value="Exonuc_VII_S"/>
    <property type="match status" value="1"/>
</dbReference>
<dbReference type="SUPFAM" id="SSF116842">
    <property type="entry name" value="XseB-like"/>
    <property type="match status" value="1"/>
</dbReference>
<comment type="function">
    <text evidence="1">Bidirectionally degrades single-stranded DNA into large acid-insoluble oligonucleotides, which are then degraded further into small acid-soluble oligonucleotides.</text>
</comment>
<comment type="catalytic activity">
    <reaction evidence="1">
        <text>Exonucleolytic cleavage in either 5'- to 3'- or 3'- to 5'-direction to yield nucleoside 5'-phosphates.</text>
        <dbReference type="EC" id="3.1.11.6"/>
    </reaction>
</comment>
<comment type="subunit">
    <text evidence="1">Heterooligomer composed of large and small subunits.</text>
</comment>
<comment type="subcellular location">
    <subcellularLocation>
        <location evidence="1">Cytoplasm</location>
    </subcellularLocation>
</comment>
<comment type="similarity">
    <text evidence="1">Belongs to the XseB family.</text>
</comment>
<reference key="1">
    <citation type="journal article" date="2006" name="J. Bacteriol.">
        <title>Whole-genome sequence of Listeria welshimeri reveals common steps in genome reduction with Listeria innocua as compared to Listeria monocytogenes.</title>
        <authorList>
            <person name="Hain T."/>
            <person name="Steinweg C."/>
            <person name="Kuenne C.T."/>
            <person name="Billion A."/>
            <person name="Ghai R."/>
            <person name="Chatterjee S.S."/>
            <person name="Domann E."/>
            <person name="Kaerst U."/>
            <person name="Goesmann A."/>
            <person name="Bekel T."/>
            <person name="Bartels D."/>
            <person name="Kaiser O."/>
            <person name="Meyer F."/>
            <person name="Puehler A."/>
            <person name="Weisshaar B."/>
            <person name="Wehland J."/>
            <person name="Liang C."/>
            <person name="Dandekar T."/>
            <person name="Lampidis R."/>
            <person name="Kreft J."/>
            <person name="Goebel W."/>
            <person name="Chakraborty T."/>
        </authorList>
    </citation>
    <scope>NUCLEOTIDE SEQUENCE [LARGE SCALE GENOMIC DNA]</scope>
    <source>
        <strain>ATCC 35897 / DSM 20650 / CCUG 15529 / CIP 8149 / NCTC 11857 / SLCC 5334 / V8</strain>
    </source>
</reference>
<feature type="chain" id="PRO_0000303722" description="Exodeoxyribonuclease 7 small subunit">
    <location>
        <begin position="1"/>
        <end position="75"/>
    </location>
</feature>
<evidence type="ECO:0000255" key="1">
    <source>
        <dbReference type="HAMAP-Rule" id="MF_00337"/>
    </source>
</evidence>